<organism>
    <name type="scientific">Drosophila melanogaster</name>
    <name type="common">Fruit fly</name>
    <dbReference type="NCBI Taxonomy" id="7227"/>
    <lineage>
        <taxon>Eukaryota</taxon>
        <taxon>Metazoa</taxon>
        <taxon>Ecdysozoa</taxon>
        <taxon>Arthropoda</taxon>
        <taxon>Hexapoda</taxon>
        <taxon>Insecta</taxon>
        <taxon>Pterygota</taxon>
        <taxon>Neoptera</taxon>
        <taxon>Endopterygota</taxon>
        <taxon>Diptera</taxon>
        <taxon>Brachycera</taxon>
        <taxon>Muscomorpha</taxon>
        <taxon>Ephydroidea</taxon>
        <taxon>Drosophilidae</taxon>
        <taxon>Drosophila</taxon>
        <taxon>Sophophora</taxon>
    </lineage>
</organism>
<comment type="function">
    <text evidence="1">Imports choline from the extracellular space to the neuron with high affinity. Rate-limiting step in acetylcholine synthesis. Sodium ion and chloride ion dependent (By similarity).</text>
</comment>
<comment type="subcellular location">
    <subcellularLocation>
        <location evidence="4">Membrane</location>
        <topology evidence="4">Multi-pass membrane protein</topology>
    </subcellularLocation>
</comment>
<comment type="similarity">
    <text evidence="4">Belongs to the sodium:solute symporter (SSF) (TC 2.A.21) family.</text>
</comment>
<protein>
    <recommendedName>
        <fullName>High-affinity choline transporter 1</fullName>
    </recommendedName>
</protein>
<feature type="chain" id="PRO_0000105396" description="High-affinity choline transporter 1">
    <location>
        <begin position="1"/>
        <end position="614"/>
    </location>
</feature>
<feature type="transmembrane region" description="Helical" evidence="2">
    <location>
        <begin position="6"/>
        <end position="26"/>
    </location>
</feature>
<feature type="topological domain" description="Cytoplasmic" evidence="2">
    <location>
        <begin position="27"/>
        <end position="44"/>
    </location>
</feature>
<feature type="transmembrane region" description="Helical" evidence="2">
    <location>
        <begin position="45"/>
        <end position="65"/>
    </location>
</feature>
<feature type="topological domain" description="Extracellular" evidence="2">
    <location>
        <begin position="66"/>
        <end position="75"/>
    </location>
</feature>
<feature type="transmembrane region" description="Helical" evidence="2">
    <location>
        <begin position="76"/>
        <end position="96"/>
    </location>
</feature>
<feature type="topological domain" description="Cytoplasmic" evidence="2">
    <location>
        <begin position="97"/>
        <end position="119"/>
    </location>
</feature>
<feature type="transmembrane region" description="Helical" evidence="2">
    <location>
        <begin position="120"/>
        <end position="140"/>
    </location>
</feature>
<feature type="topological domain" description="Extracellular" evidence="2">
    <location>
        <begin position="141"/>
        <end position="158"/>
    </location>
</feature>
<feature type="transmembrane region" description="Helical" evidence="2">
    <location>
        <begin position="159"/>
        <end position="179"/>
    </location>
</feature>
<feature type="topological domain" description="Cytoplasmic" evidence="2">
    <location>
        <begin position="180"/>
        <end position="185"/>
    </location>
</feature>
<feature type="transmembrane region" description="Helical" evidence="2">
    <location>
        <begin position="186"/>
        <end position="206"/>
    </location>
</feature>
<feature type="topological domain" description="Extracellular" evidence="2">
    <location>
        <begin position="207"/>
        <end position="225"/>
    </location>
</feature>
<feature type="transmembrane region" description="Helical" evidence="2">
    <location>
        <begin position="226"/>
        <end position="246"/>
    </location>
</feature>
<feature type="topological domain" description="Cytoplasmic" evidence="2">
    <location>
        <begin position="247"/>
        <end position="262"/>
    </location>
</feature>
<feature type="transmembrane region" description="Helical" evidence="2">
    <location>
        <begin position="263"/>
        <end position="283"/>
    </location>
</feature>
<feature type="topological domain" description="Extracellular" evidence="2">
    <location>
        <begin position="284"/>
        <end position="305"/>
    </location>
</feature>
<feature type="transmembrane region" description="Helical" evidence="2">
    <location>
        <begin position="306"/>
        <end position="326"/>
    </location>
</feature>
<feature type="topological domain" description="Cytoplasmic" evidence="2">
    <location>
        <begin position="327"/>
        <end position="364"/>
    </location>
</feature>
<feature type="transmembrane region" description="Helical" evidence="2">
    <location>
        <begin position="365"/>
        <end position="385"/>
    </location>
</feature>
<feature type="topological domain" description="Extracellular" evidence="2">
    <location>
        <begin position="386"/>
        <end position="394"/>
    </location>
</feature>
<feature type="transmembrane region" description="Helical" evidence="2">
    <location>
        <begin position="395"/>
        <end position="415"/>
    </location>
</feature>
<feature type="topological domain" description="Cytoplasmic" evidence="2">
    <location>
        <begin position="416"/>
        <end position="424"/>
    </location>
</feature>
<feature type="transmembrane region" description="Helical" evidence="2">
    <location>
        <begin position="425"/>
        <end position="445"/>
    </location>
</feature>
<feature type="topological domain" description="Extracellular" evidence="2">
    <location>
        <begin position="446"/>
        <end position="467"/>
    </location>
</feature>
<feature type="transmembrane region" description="Helical" evidence="2">
    <location>
        <begin position="468"/>
        <end position="488"/>
    </location>
</feature>
<feature type="topological domain" description="Cytoplasmic" evidence="2">
    <location>
        <begin position="489"/>
        <end position="614"/>
    </location>
</feature>
<feature type="region of interest" description="Disordered" evidence="3">
    <location>
        <begin position="583"/>
        <end position="614"/>
    </location>
</feature>
<feature type="glycosylation site" description="N-linked (GlcNAc...) asparagine" evidence="2">
    <location>
        <position position="289"/>
    </location>
</feature>
<sequence>MINIAGVVSIVLFYLLILVVGIWAGRKKQSGNDSEEEVMLAGRSIGLFVGIFTMTATWVGGGYINGTAEAIYTSGLVWCQAPFGYALSLVFGGIFFANPMRKQGYITMLDPLQDSFGERMGGLLFLPALCGEVFWAAGILAALGATLSVIIDMDHRTSVILSSCIAIFYTLFGGLYSVAYTDVIQLFCIFIGLWMCIPFAWSNEHVGSLSDLEVDWIGHVEPKKHWLYIDYGLLLVFGGIPWQVYFQRVLSSKTAGRAQLLSYVAAAGCILMAIPPVLIGAIAKATPWNETDYKGPYPLTVDETSMILPMVLQYLTPDFVSFFGLGAVSAAVMSSADSSVLSAASMFARNVYKLIFRQKASEMEIIWVMRVAIIVVGILATIMALTIPSIYGLWSMCSDLVYVILFPQLLMVVHFKKHCNTYGSLSAYIVALAIRLSGGEAILGLAPLIKYPGYDEETKEQMFPFRTMAMLLSLVTLISVSWWTKMMFESGKLPPSYDYFRCVVNIPEDVQRVGDPSESGEQLSVMAGPLARSYGAATMAGKDERNGRINPALESDDDLPVAEARRINQETAQAQVKKMLDNATGVKPSGGGGGHLQSQSGMAMPTAEQDNTAF</sequence>
<gene>
    <name evidence="5" type="primary">ChT</name>
    <name evidence="5" type="ORF">CG7708</name>
</gene>
<reference key="1">
    <citation type="journal article" date="2000" name="Science">
        <title>The genome sequence of Drosophila melanogaster.</title>
        <authorList>
            <person name="Adams M.D."/>
            <person name="Celniker S.E."/>
            <person name="Holt R.A."/>
            <person name="Evans C.A."/>
            <person name="Gocayne J.D."/>
            <person name="Amanatides P.G."/>
            <person name="Scherer S.E."/>
            <person name="Li P.W."/>
            <person name="Hoskins R.A."/>
            <person name="Galle R.F."/>
            <person name="George R.A."/>
            <person name="Lewis S.E."/>
            <person name="Richards S."/>
            <person name="Ashburner M."/>
            <person name="Henderson S.N."/>
            <person name="Sutton G.G."/>
            <person name="Wortman J.R."/>
            <person name="Yandell M.D."/>
            <person name="Zhang Q."/>
            <person name="Chen L.X."/>
            <person name="Brandon R.C."/>
            <person name="Rogers Y.-H.C."/>
            <person name="Blazej R.G."/>
            <person name="Champe M."/>
            <person name="Pfeiffer B.D."/>
            <person name="Wan K.H."/>
            <person name="Doyle C."/>
            <person name="Baxter E.G."/>
            <person name="Helt G."/>
            <person name="Nelson C.R."/>
            <person name="Miklos G.L.G."/>
            <person name="Abril J.F."/>
            <person name="Agbayani A."/>
            <person name="An H.-J."/>
            <person name="Andrews-Pfannkoch C."/>
            <person name="Baldwin D."/>
            <person name="Ballew R.M."/>
            <person name="Basu A."/>
            <person name="Baxendale J."/>
            <person name="Bayraktaroglu L."/>
            <person name="Beasley E.M."/>
            <person name="Beeson K.Y."/>
            <person name="Benos P.V."/>
            <person name="Berman B.P."/>
            <person name="Bhandari D."/>
            <person name="Bolshakov S."/>
            <person name="Borkova D."/>
            <person name="Botchan M.R."/>
            <person name="Bouck J."/>
            <person name="Brokstein P."/>
            <person name="Brottier P."/>
            <person name="Burtis K.C."/>
            <person name="Busam D.A."/>
            <person name="Butler H."/>
            <person name="Cadieu E."/>
            <person name="Center A."/>
            <person name="Chandra I."/>
            <person name="Cherry J.M."/>
            <person name="Cawley S."/>
            <person name="Dahlke C."/>
            <person name="Davenport L.B."/>
            <person name="Davies P."/>
            <person name="de Pablos B."/>
            <person name="Delcher A."/>
            <person name="Deng Z."/>
            <person name="Mays A.D."/>
            <person name="Dew I."/>
            <person name="Dietz S.M."/>
            <person name="Dodson K."/>
            <person name="Doup L.E."/>
            <person name="Downes M."/>
            <person name="Dugan-Rocha S."/>
            <person name="Dunkov B.C."/>
            <person name="Dunn P."/>
            <person name="Durbin K.J."/>
            <person name="Evangelista C.C."/>
            <person name="Ferraz C."/>
            <person name="Ferriera S."/>
            <person name="Fleischmann W."/>
            <person name="Fosler C."/>
            <person name="Gabrielian A.E."/>
            <person name="Garg N.S."/>
            <person name="Gelbart W.M."/>
            <person name="Glasser K."/>
            <person name="Glodek A."/>
            <person name="Gong F."/>
            <person name="Gorrell J.H."/>
            <person name="Gu Z."/>
            <person name="Guan P."/>
            <person name="Harris M."/>
            <person name="Harris N.L."/>
            <person name="Harvey D.A."/>
            <person name="Heiman T.J."/>
            <person name="Hernandez J.R."/>
            <person name="Houck J."/>
            <person name="Hostin D."/>
            <person name="Houston K.A."/>
            <person name="Howland T.J."/>
            <person name="Wei M.-H."/>
            <person name="Ibegwam C."/>
            <person name="Jalali M."/>
            <person name="Kalush F."/>
            <person name="Karpen G.H."/>
            <person name="Ke Z."/>
            <person name="Kennison J.A."/>
            <person name="Ketchum K.A."/>
            <person name="Kimmel B.E."/>
            <person name="Kodira C.D."/>
            <person name="Kraft C.L."/>
            <person name="Kravitz S."/>
            <person name="Kulp D."/>
            <person name="Lai Z."/>
            <person name="Lasko P."/>
            <person name="Lei Y."/>
            <person name="Levitsky A.A."/>
            <person name="Li J.H."/>
            <person name="Li Z."/>
            <person name="Liang Y."/>
            <person name="Lin X."/>
            <person name="Liu X."/>
            <person name="Mattei B."/>
            <person name="McIntosh T.C."/>
            <person name="McLeod M.P."/>
            <person name="McPherson D."/>
            <person name="Merkulov G."/>
            <person name="Milshina N.V."/>
            <person name="Mobarry C."/>
            <person name="Morris J."/>
            <person name="Moshrefi A."/>
            <person name="Mount S.M."/>
            <person name="Moy M."/>
            <person name="Murphy B."/>
            <person name="Murphy L."/>
            <person name="Muzny D.M."/>
            <person name="Nelson D.L."/>
            <person name="Nelson D.R."/>
            <person name="Nelson K.A."/>
            <person name="Nixon K."/>
            <person name="Nusskern D.R."/>
            <person name="Pacleb J.M."/>
            <person name="Palazzolo M."/>
            <person name="Pittman G.S."/>
            <person name="Pan S."/>
            <person name="Pollard J."/>
            <person name="Puri V."/>
            <person name="Reese M.G."/>
            <person name="Reinert K."/>
            <person name="Remington K."/>
            <person name="Saunders R.D.C."/>
            <person name="Scheeler F."/>
            <person name="Shen H."/>
            <person name="Shue B.C."/>
            <person name="Siden-Kiamos I."/>
            <person name="Simpson M."/>
            <person name="Skupski M.P."/>
            <person name="Smith T.J."/>
            <person name="Spier E."/>
            <person name="Spradling A.C."/>
            <person name="Stapleton M."/>
            <person name="Strong R."/>
            <person name="Sun E."/>
            <person name="Svirskas R."/>
            <person name="Tector C."/>
            <person name="Turner R."/>
            <person name="Venter E."/>
            <person name="Wang A.H."/>
            <person name="Wang X."/>
            <person name="Wang Z.-Y."/>
            <person name="Wassarman D.A."/>
            <person name="Weinstock G.M."/>
            <person name="Weissenbach J."/>
            <person name="Williams S.M."/>
            <person name="Woodage T."/>
            <person name="Worley K.C."/>
            <person name="Wu D."/>
            <person name="Yang S."/>
            <person name="Yao Q.A."/>
            <person name="Ye J."/>
            <person name="Yeh R.-F."/>
            <person name="Zaveri J.S."/>
            <person name="Zhan M."/>
            <person name="Zhang G."/>
            <person name="Zhao Q."/>
            <person name="Zheng L."/>
            <person name="Zheng X.H."/>
            <person name="Zhong F.N."/>
            <person name="Zhong W."/>
            <person name="Zhou X."/>
            <person name="Zhu S.C."/>
            <person name="Zhu X."/>
            <person name="Smith H.O."/>
            <person name="Gibbs R.A."/>
            <person name="Myers E.W."/>
            <person name="Rubin G.M."/>
            <person name="Venter J.C."/>
        </authorList>
    </citation>
    <scope>NUCLEOTIDE SEQUENCE [LARGE SCALE GENOMIC DNA]</scope>
    <source>
        <strain>Berkeley</strain>
    </source>
</reference>
<reference key="2">
    <citation type="journal article" date="2002" name="Genome Biol.">
        <title>Annotation of the Drosophila melanogaster euchromatic genome: a systematic review.</title>
        <authorList>
            <person name="Misra S."/>
            <person name="Crosby M.A."/>
            <person name="Mungall C.J."/>
            <person name="Matthews B.B."/>
            <person name="Campbell K.S."/>
            <person name="Hradecky P."/>
            <person name="Huang Y."/>
            <person name="Kaminker J.S."/>
            <person name="Millburn G.H."/>
            <person name="Prochnik S.E."/>
            <person name="Smith C.D."/>
            <person name="Tupy J.L."/>
            <person name="Whitfield E.J."/>
            <person name="Bayraktaroglu L."/>
            <person name="Berman B.P."/>
            <person name="Bettencourt B.R."/>
            <person name="Celniker S.E."/>
            <person name="de Grey A.D.N.J."/>
            <person name="Drysdale R.A."/>
            <person name="Harris N.L."/>
            <person name="Richter J."/>
            <person name="Russo S."/>
            <person name="Schroeder A.J."/>
            <person name="Shu S.Q."/>
            <person name="Stapleton M."/>
            <person name="Yamada C."/>
            <person name="Ashburner M."/>
            <person name="Gelbart W.M."/>
            <person name="Rubin G.M."/>
            <person name="Lewis S.E."/>
        </authorList>
    </citation>
    <scope>GENOME REANNOTATION</scope>
    <source>
        <strain>Berkeley</strain>
    </source>
</reference>
<reference key="3">
    <citation type="journal article" date="2002" name="Genome Biol.">
        <title>A Drosophila full-length cDNA resource.</title>
        <authorList>
            <person name="Stapleton M."/>
            <person name="Carlson J.W."/>
            <person name="Brokstein P."/>
            <person name="Yu C."/>
            <person name="Champe M."/>
            <person name="George R.A."/>
            <person name="Guarin H."/>
            <person name="Kronmiller B."/>
            <person name="Pacleb J.M."/>
            <person name="Park S."/>
            <person name="Wan K.H."/>
            <person name="Rubin G.M."/>
            <person name="Celniker S.E."/>
        </authorList>
    </citation>
    <scope>NUCLEOTIDE SEQUENCE [LARGE SCALE MRNA]</scope>
    <source>
        <strain>Berkeley</strain>
        <tissue>Head</tissue>
    </source>
</reference>
<proteinExistence type="evidence at transcript level"/>
<keyword id="KW-0325">Glycoprotein</keyword>
<keyword id="KW-0406">Ion transport</keyword>
<keyword id="KW-0472">Membrane</keyword>
<keyword id="KW-0530">Neurotransmitter biosynthesis</keyword>
<keyword id="KW-1185">Reference proteome</keyword>
<keyword id="KW-0915">Sodium</keyword>
<keyword id="KW-0739">Sodium transport</keyword>
<keyword id="KW-0769">Symport</keyword>
<keyword id="KW-0812">Transmembrane</keyword>
<keyword id="KW-1133">Transmembrane helix</keyword>
<keyword id="KW-0813">Transport</keyword>
<name>SC5A7_DROME</name>
<evidence type="ECO:0000250" key="1"/>
<evidence type="ECO:0000255" key="2"/>
<evidence type="ECO:0000256" key="3">
    <source>
        <dbReference type="SAM" id="MobiDB-lite"/>
    </source>
</evidence>
<evidence type="ECO:0000305" key="4"/>
<evidence type="ECO:0000312" key="5">
    <source>
        <dbReference type="FlyBase" id="FBgn0038641"/>
    </source>
</evidence>
<dbReference type="EMBL" id="AE014297">
    <property type="protein sequence ID" value="AAF55583.2"/>
    <property type="molecule type" value="Genomic_DNA"/>
</dbReference>
<dbReference type="EMBL" id="AE014297">
    <property type="protein sequence ID" value="AAN13786.1"/>
    <property type="molecule type" value="Genomic_DNA"/>
</dbReference>
<dbReference type="EMBL" id="AY047521">
    <property type="protein sequence ID" value="AAK77253.1"/>
    <property type="molecule type" value="mRNA"/>
</dbReference>
<dbReference type="RefSeq" id="NP_650743.1">
    <property type="nucleotide sequence ID" value="NM_142486.3"/>
</dbReference>
<dbReference type="RefSeq" id="NP_732369.1">
    <property type="nucleotide sequence ID" value="NM_169832.2"/>
</dbReference>
<dbReference type="SMR" id="Q9VE46"/>
<dbReference type="BioGRID" id="67252">
    <property type="interactions" value="1"/>
</dbReference>
<dbReference type="FunCoup" id="Q9VE46">
    <property type="interactions" value="57"/>
</dbReference>
<dbReference type="IntAct" id="Q9VE46">
    <property type="interactions" value="1"/>
</dbReference>
<dbReference type="STRING" id="7227.FBpp0083084"/>
<dbReference type="GlyCosmos" id="Q9VE46">
    <property type="glycosylation" value="1 site, No reported glycans"/>
</dbReference>
<dbReference type="GlyGen" id="Q9VE46">
    <property type="glycosylation" value="1 site"/>
</dbReference>
<dbReference type="PaxDb" id="7227-FBpp0083083"/>
<dbReference type="DNASU" id="42245"/>
<dbReference type="EnsemblMetazoa" id="FBtr0083668">
    <property type="protein sequence ID" value="FBpp0083083"/>
    <property type="gene ID" value="FBgn0038641"/>
</dbReference>
<dbReference type="EnsemblMetazoa" id="FBtr0083669">
    <property type="protein sequence ID" value="FBpp0083084"/>
    <property type="gene ID" value="FBgn0038641"/>
</dbReference>
<dbReference type="GeneID" id="42245"/>
<dbReference type="KEGG" id="dme:Dmel_CG7708"/>
<dbReference type="UCSC" id="CG7708-RA">
    <property type="organism name" value="d. melanogaster"/>
</dbReference>
<dbReference type="AGR" id="FB:FBgn0038641"/>
<dbReference type="CTD" id="42245"/>
<dbReference type="FlyBase" id="FBgn0038641">
    <property type="gene designation" value="ChT"/>
</dbReference>
<dbReference type="VEuPathDB" id="VectorBase:FBgn0038641"/>
<dbReference type="eggNOG" id="KOG3761">
    <property type="taxonomic scope" value="Eukaryota"/>
</dbReference>
<dbReference type="GeneTree" id="ENSGT00940000168351"/>
<dbReference type="HOGENOM" id="CLU_018808_10_0_1"/>
<dbReference type="InParanoid" id="Q9VE46"/>
<dbReference type="OMA" id="WKTKNTG"/>
<dbReference type="OrthoDB" id="546820at2759"/>
<dbReference type="PhylomeDB" id="Q9VE46"/>
<dbReference type="Reactome" id="R-DME-264642">
    <property type="pathway name" value="Acetylcholine Neurotransmitter Release Cycle"/>
</dbReference>
<dbReference type="Reactome" id="R-DME-425366">
    <property type="pathway name" value="Transport of bile salts and organic acids, metal ions and amine compounds"/>
</dbReference>
<dbReference type="BioGRID-ORCS" id="42245">
    <property type="hits" value="0 hits in 1 CRISPR screen"/>
</dbReference>
<dbReference type="GenomeRNAi" id="42245"/>
<dbReference type="PRO" id="PR:Q9VE46"/>
<dbReference type="Proteomes" id="UP000000803">
    <property type="component" value="Chromosome 3R"/>
</dbReference>
<dbReference type="Bgee" id="FBgn0038641">
    <property type="expression patterns" value="Expressed in antennal lobe projection neuron (Drosophila) in insect head and 133 other cell types or tissues"/>
</dbReference>
<dbReference type="GO" id="GO:0016020">
    <property type="term" value="C:membrane"/>
    <property type="evidence" value="ECO:0000250"/>
    <property type="project" value="UniProtKB"/>
</dbReference>
<dbReference type="GO" id="GO:0005886">
    <property type="term" value="C:plasma membrane"/>
    <property type="evidence" value="ECO:0000318"/>
    <property type="project" value="GO_Central"/>
</dbReference>
<dbReference type="GO" id="GO:0015171">
    <property type="term" value="F:amino acid transmembrane transporter activity"/>
    <property type="evidence" value="ECO:0000250"/>
    <property type="project" value="FlyBase"/>
</dbReference>
<dbReference type="GO" id="GO:0015220">
    <property type="term" value="F:choline transmembrane transporter activity"/>
    <property type="evidence" value="ECO:0000250"/>
    <property type="project" value="UniProtKB"/>
</dbReference>
<dbReference type="GO" id="GO:0005307">
    <property type="term" value="F:choline:sodium symporter activity"/>
    <property type="evidence" value="ECO:0000318"/>
    <property type="project" value="GO_Central"/>
</dbReference>
<dbReference type="GO" id="GO:0008292">
    <property type="term" value="P:acetylcholine biosynthetic process"/>
    <property type="evidence" value="ECO:0000250"/>
    <property type="project" value="UniProtKB"/>
</dbReference>
<dbReference type="GO" id="GO:0003333">
    <property type="term" value="P:amino acid transmembrane transport"/>
    <property type="evidence" value="ECO:0000250"/>
    <property type="project" value="FlyBase"/>
</dbReference>
<dbReference type="GO" id="GO:0015871">
    <property type="term" value="P:choline transport"/>
    <property type="evidence" value="ECO:0000318"/>
    <property type="project" value="GO_Central"/>
</dbReference>
<dbReference type="CDD" id="cd11474">
    <property type="entry name" value="SLC5sbd_CHT"/>
    <property type="match status" value="1"/>
</dbReference>
<dbReference type="FunFam" id="1.20.1730.10:FF:000008">
    <property type="entry name" value="High affinity choline transporter 1"/>
    <property type="match status" value="1"/>
</dbReference>
<dbReference type="Gene3D" id="1.20.1730.10">
    <property type="entry name" value="Sodium/glucose cotransporter"/>
    <property type="match status" value="1"/>
</dbReference>
<dbReference type="InterPro" id="IPR052244">
    <property type="entry name" value="Choline_transporter"/>
</dbReference>
<dbReference type="InterPro" id="IPR038377">
    <property type="entry name" value="Na/Glc_symporter_sf"/>
</dbReference>
<dbReference type="InterPro" id="IPR001734">
    <property type="entry name" value="Na/solute_symporter"/>
</dbReference>
<dbReference type="PANTHER" id="PTHR45897">
    <property type="entry name" value="HIGH-AFFINITY CHOLINE TRANSPORTER 1"/>
    <property type="match status" value="1"/>
</dbReference>
<dbReference type="PANTHER" id="PTHR45897:SF4">
    <property type="entry name" value="HIGH-AFFINITY CHOLINE TRANSPORTER 1"/>
    <property type="match status" value="1"/>
</dbReference>
<dbReference type="Pfam" id="PF00474">
    <property type="entry name" value="SSF"/>
    <property type="match status" value="1"/>
</dbReference>
<dbReference type="PROSITE" id="PS50283">
    <property type="entry name" value="NA_SOLUT_SYMP_3"/>
    <property type="match status" value="1"/>
</dbReference>
<accession>Q9VE46</accession>
<accession>A4V340</accession>
<accession>Q961W3</accession>